<gene>
    <name evidence="1" type="primary">pyrE</name>
    <name type="ordered locus">SAV1205</name>
</gene>
<organism>
    <name type="scientific">Staphylococcus aureus (strain Mu50 / ATCC 700699)</name>
    <dbReference type="NCBI Taxonomy" id="158878"/>
    <lineage>
        <taxon>Bacteria</taxon>
        <taxon>Bacillati</taxon>
        <taxon>Bacillota</taxon>
        <taxon>Bacilli</taxon>
        <taxon>Bacillales</taxon>
        <taxon>Staphylococcaceae</taxon>
        <taxon>Staphylococcus</taxon>
    </lineage>
</organism>
<proteinExistence type="inferred from homology"/>
<feature type="chain" id="PRO_0000110737" description="Orotate phosphoribosyltransferase">
    <location>
        <begin position="1"/>
        <end position="203"/>
    </location>
</feature>
<feature type="binding site" evidence="1">
    <location>
        <position position="94"/>
    </location>
    <ligand>
        <name>5-phospho-alpha-D-ribose 1-diphosphate</name>
        <dbReference type="ChEBI" id="CHEBI:58017"/>
        <note>ligand shared between dimeric partners</note>
    </ligand>
</feature>
<feature type="binding site" evidence="1">
    <location>
        <position position="98"/>
    </location>
    <ligand>
        <name>5-phospho-alpha-D-ribose 1-diphosphate</name>
        <dbReference type="ChEBI" id="CHEBI:58017"/>
        <note>ligand shared between dimeric partners</note>
    </ligand>
</feature>
<feature type="binding site" evidence="1">
    <location>
        <position position="100"/>
    </location>
    <ligand>
        <name>5-phospho-alpha-D-ribose 1-diphosphate</name>
        <dbReference type="ChEBI" id="CHEBI:58017"/>
        <note>ligand shared between dimeric partners</note>
    </ligand>
</feature>
<feature type="binding site" description="in other chain" evidence="1">
    <location>
        <begin position="120"/>
        <end position="128"/>
    </location>
    <ligand>
        <name>5-phospho-alpha-D-ribose 1-diphosphate</name>
        <dbReference type="ChEBI" id="CHEBI:58017"/>
        <note>ligand shared between dimeric partners</note>
    </ligand>
</feature>
<feature type="binding site" evidence="1">
    <location>
        <position position="124"/>
    </location>
    <ligand>
        <name>orotate</name>
        <dbReference type="ChEBI" id="CHEBI:30839"/>
    </ligand>
</feature>
<accession>P65916</accession>
<accession>Q99UR3</accession>
<protein>
    <recommendedName>
        <fullName evidence="1">Orotate phosphoribosyltransferase</fullName>
        <shortName evidence="1">OPRT</shortName>
        <shortName evidence="1">OPRTase</shortName>
        <ecNumber evidence="1">2.4.2.10</ecNumber>
    </recommendedName>
</protein>
<dbReference type="EC" id="2.4.2.10" evidence="1"/>
<dbReference type="EMBL" id="BA000017">
    <property type="protein sequence ID" value="BAB57367.1"/>
    <property type="molecule type" value="Genomic_DNA"/>
</dbReference>
<dbReference type="RefSeq" id="WP_001040248.1">
    <property type="nucleotide sequence ID" value="NC_002758.2"/>
</dbReference>
<dbReference type="SMR" id="P65916"/>
<dbReference type="KEGG" id="sav:SAV1205"/>
<dbReference type="HOGENOM" id="CLU_074878_1_1_9"/>
<dbReference type="PhylomeDB" id="P65916"/>
<dbReference type="UniPathway" id="UPA00070">
    <property type="reaction ID" value="UER00119"/>
</dbReference>
<dbReference type="Proteomes" id="UP000002481">
    <property type="component" value="Chromosome"/>
</dbReference>
<dbReference type="GO" id="GO:0000287">
    <property type="term" value="F:magnesium ion binding"/>
    <property type="evidence" value="ECO:0007669"/>
    <property type="project" value="UniProtKB-UniRule"/>
</dbReference>
<dbReference type="GO" id="GO:0004588">
    <property type="term" value="F:orotate phosphoribosyltransferase activity"/>
    <property type="evidence" value="ECO:0007669"/>
    <property type="project" value="UniProtKB-UniRule"/>
</dbReference>
<dbReference type="GO" id="GO:0044205">
    <property type="term" value="P:'de novo' UMP biosynthetic process"/>
    <property type="evidence" value="ECO:0007669"/>
    <property type="project" value="UniProtKB-UniRule"/>
</dbReference>
<dbReference type="GO" id="GO:0019856">
    <property type="term" value="P:pyrimidine nucleobase biosynthetic process"/>
    <property type="evidence" value="ECO:0007669"/>
    <property type="project" value="TreeGrafter"/>
</dbReference>
<dbReference type="CDD" id="cd06223">
    <property type="entry name" value="PRTases_typeI"/>
    <property type="match status" value="1"/>
</dbReference>
<dbReference type="Gene3D" id="3.40.50.2020">
    <property type="match status" value="1"/>
</dbReference>
<dbReference type="HAMAP" id="MF_01208">
    <property type="entry name" value="PyrE"/>
    <property type="match status" value="1"/>
</dbReference>
<dbReference type="InterPro" id="IPR023031">
    <property type="entry name" value="OPRT"/>
</dbReference>
<dbReference type="InterPro" id="IPR004467">
    <property type="entry name" value="Or_phspho_trans_dom"/>
</dbReference>
<dbReference type="InterPro" id="IPR000836">
    <property type="entry name" value="PRibTrfase_dom"/>
</dbReference>
<dbReference type="InterPro" id="IPR029057">
    <property type="entry name" value="PRTase-like"/>
</dbReference>
<dbReference type="NCBIfam" id="TIGR00336">
    <property type="entry name" value="pyrE"/>
    <property type="match status" value="1"/>
</dbReference>
<dbReference type="PANTHER" id="PTHR19278">
    <property type="entry name" value="OROTATE PHOSPHORIBOSYLTRANSFERASE"/>
    <property type="match status" value="1"/>
</dbReference>
<dbReference type="PANTHER" id="PTHR19278:SF9">
    <property type="entry name" value="URIDINE 5'-MONOPHOSPHATE SYNTHASE"/>
    <property type="match status" value="1"/>
</dbReference>
<dbReference type="Pfam" id="PF00156">
    <property type="entry name" value="Pribosyltran"/>
    <property type="match status" value="1"/>
</dbReference>
<dbReference type="SUPFAM" id="SSF53271">
    <property type="entry name" value="PRTase-like"/>
    <property type="match status" value="1"/>
</dbReference>
<dbReference type="PROSITE" id="PS00103">
    <property type="entry name" value="PUR_PYR_PR_TRANSFER"/>
    <property type="match status" value="1"/>
</dbReference>
<reference key="1">
    <citation type="journal article" date="2001" name="Lancet">
        <title>Whole genome sequencing of meticillin-resistant Staphylococcus aureus.</title>
        <authorList>
            <person name="Kuroda M."/>
            <person name="Ohta T."/>
            <person name="Uchiyama I."/>
            <person name="Baba T."/>
            <person name="Yuzawa H."/>
            <person name="Kobayashi I."/>
            <person name="Cui L."/>
            <person name="Oguchi A."/>
            <person name="Aoki K."/>
            <person name="Nagai Y."/>
            <person name="Lian J.-Q."/>
            <person name="Ito T."/>
            <person name="Kanamori M."/>
            <person name="Matsumaru H."/>
            <person name="Maruyama A."/>
            <person name="Murakami H."/>
            <person name="Hosoyama A."/>
            <person name="Mizutani-Ui Y."/>
            <person name="Takahashi N.K."/>
            <person name="Sawano T."/>
            <person name="Inoue R."/>
            <person name="Kaito C."/>
            <person name="Sekimizu K."/>
            <person name="Hirakawa H."/>
            <person name="Kuhara S."/>
            <person name="Goto S."/>
            <person name="Yabuzaki J."/>
            <person name="Kanehisa M."/>
            <person name="Yamashita A."/>
            <person name="Oshima K."/>
            <person name="Furuya K."/>
            <person name="Yoshino C."/>
            <person name="Shiba T."/>
            <person name="Hattori M."/>
            <person name="Ogasawara N."/>
            <person name="Hayashi H."/>
            <person name="Hiramatsu K."/>
        </authorList>
    </citation>
    <scope>NUCLEOTIDE SEQUENCE [LARGE SCALE GENOMIC DNA]</scope>
    <source>
        <strain>Mu50 / ATCC 700699</strain>
    </source>
</reference>
<comment type="function">
    <text evidence="1">Catalyzes the transfer of a ribosyl phosphate group from 5-phosphoribose 1-diphosphate to orotate, leading to the formation of orotidine monophosphate (OMP).</text>
</comment>
<comment type="catalytic activity">
    <reaction evidence="1">
        <text>orotidine 5'-phosphate + diphosphate = orotate + 5-phospho-alpha-D-ribose 1-diphosphate</text>
        <dbReference type="Rhea" id="RHEA:10380"/>
        <dbReference type="ChEBI" id="CHEBI:30839"/>
        <dbReference type="ChEBI" id="CHEBI:33019"/>
        <dbReference type="ChEBI" id="CHEBI:57538"/>
        <dbReference type="ChEBI" id="CHEBI:58017"/>
        <dbReference type="EC" id="2.4.2.10"/>
    </reaction>
</comment>
<comment type="cofactor">
    <cofactor evidence="1">
        <name>Mg(2+)</name>
        <dbReference type="ChEBI" id="CHEBI:18420"/>
    </cofactor>
</comment>
<comment type="pathway">
    <text evidence="1">Pyrimidine metabolism; UMP biosynthesis via de novo pathway; UMP from orotate: step 1/2.</text>
</comment>
<comment type="subunit">
    <text evidence="1">Homodimer.</text>
</comment>
<comment type="similarity">
    <text evidence="1">Belongs to the purine/pyrimidine phosphoribosyltransferase family. PyrE subfamily.</text>
</comment>
<sequence length="203" mass="22057">MAKEIAKSLLDIEAVTLSPNDLYTWSSGIKSPIYCDNRVTLGYPLVRGAIRDGLINLIKEHFPEVEVISGTATAGIPHAAFIAEKLKLPMNYVRSSNKSHGKQNQIEGAKSEGKKVVVIEDLISTGGSSVTAVEALKQAGAEVLGVVAIFTYGLKKADDTFSNIQLPFYTLSDYNELIEVAENEGKISSEDIQTLVEWRDNLA</sequence>
<keyword id="KW-0328">Glycosyltransferase</keyword>
<keyword id="KW-0460">Magnesium</keyword>
<keyword id="KW-0665">Pyrimidine biosynthesis</keyword>
<keyword id="KW-0808">Transferase</keyword>
<evidence type="ECO:0000255" key="1">
    <source>
        <dbReference type="HAMAP-Rule" id="MF_01208"/>
    </source>
</evidence>
<name>PYRE_STAAM</name>